<name>LEU12_ARATH</name>
<comment type="function">
    <text evidence="5 6">Catalyzes the condensation of the acetyl group of acetyl-CoA with 3-methyl-2-oxobutanoate (2-oxoisovalerate) to form 3-carboxy-3-hydroxy-4-methylpentanoate (2-isopropylmalate). Involved in Leu biosynthesis, but does not participate in the chain elongation of glucosinolates.</text>
</comment>
<comment type="catalytic activity">
    <reaction evidence="5 6">
        <text>3-methyl-2-oxobutanoate + acetyl-CoA + H2O = (2S)-2-isopropylmalate + CoA + H(+)</text>
        <dbReference type="Rhea" id="RHEA:21524"/>
        <dbReference type="ChEBI" id="CHEBI:1178"/>
        <dbReference type="ChEBI" id="CHEBI:11851"/>
        <dbReference type="ChEBI" id="CHEBI:15377"/>
        <dbReference type="ChEBI" id="CHEBI:15378"/>
        <dbReference type="ChEBI" id="CHEBI:57287"/>
        <dbReference type="ChEBI" id="CHEBI:57288"/>
        <dbReference type="EC" id="2.3.3.13"/>
    </reaction>
</comment>
<comment type="cofactor">
    <cofactor evidence="6">
        <name>Mg(2+)</name>
        <dbReference type="ChEBI" id="CHEBI:18420"/>
    </cofactor>
    <cofactor evidence="6">
        <name>Mn(2+)</name>
        <dbReference type="ChEBI" id="CHEBI:29035"/>
    </cofactor>
</comment>
<comment type="activity regulation">
    <text evidence="6">Feedback inhibition by Leu.</text>
</comment>
<comment type="biophysicochemical properties">
    <kinetics>
        <KM evidence="6">279 uM for 2-oxoisovalerate</KM>
        <KM evidence="6">16 uM for acetyl-CoA</KM>
        <Vmax evidence="6">2200.0 umol/min/g enzyme with 2-oxoisovalerate as substrate</Vmax>
        <Vmax evidence="6">1800.0 umol/min/g enzyme with acetyl-CoA as substrate</Vmax>
        <text evidence="6">kcat is 2.3 sec(-1) with 2-oxoisovalerate as substrate (PubMed:17189332). kcat is 1.9 sec(-1) with acetyl-CoA as substrate (PubMed:17189332).</text>
    </kinetics>
    <phDependence>
        <text evidence="6">Optimum pH is 8.5.</text>
    </phDependence>
</comment>
<comment type="pathway">
    <text evidence="5 6">Amino-acid biosynthesis; L-leucine biosynthesis; L-leucine from 3-methyl-2-oxobutanoate: step 1/4.</text>
</comment>
<comment type="subunit">
    <text evidence="11">Homotetramer.</text>
</comment>
<comment type="subcellular location">
    <subcellularLocation>
        <location evidence="2">Plastid</location>
        <location evidence="2">Chloroplast</location>
    </subcellularLocation>
</comment>
<comment type="tissue specificity">
    <text evidence="4 6">Expressed in roots, stems, leaves, flowers and siliques.</text>
</comment>
<comment type="disruption phenotype">
    <text evidence="6">Plants do not show any changes in soluble amino acid content.</text>
</comment>
<comment type="similarity">
    <text evidence="10">Belongs to the alpha-IPM synthase/homocitrate synthase family. LeuA type 1 subfamily.</text>
</comment>
<comment type="sequence caution" evidence="10">
    <conflict type="frameshift">
        <sequence resource="EMBL-CDS" id="BAC43169"/>
    </conflict>
</comment>
<evidence type="ECO:0000250" key="1">
    <source>
        <dbReference type="UniProtKB" id="Q9JZG1"/>
    </source>
</evidence>
<evidence type="ECO:0000255" key="2"/>
<evidence type="ECO:0000255" key="3">
    <source>
        <dbReference type="PROSITE-ProRule" id="PRU01151"/>
    </source>
</evidence>
<evidence type="ECO:0000269" key="4">
    <source>
    </source>
</evidence>
<evidence type="ECO:0000269" key="5">
    <source>
    </source>
</evidence>
<evidence type="ECO:0000269" key="6">
    <source>
    </source>
</evidence>
<evidence type="ECO:0000303" key="7">
    <source>
    </source>
</evidence>
<evidence type="ECO:0000303" key="8">
    <source>
    </source>
</evidence>
<evidence type="ECO:0000303" key="9">
    <source>
    </source>
</evidence>
<evidence type="ECO:0000305" key="10"/>
<evidence type="ECO:0000305" key="11">
    <source>
    </source>
</evidence>
<evidence type="ECO:0000312" key="12">
    <source>
        <dbReference type="Araport" id="AT1G74040"/>
    </source>
</evidence>
<evidence type="ECO:0000312" key="13">
    <source>
        <dbReference type="EMBL" id="AAG52530.1"/>
    </source>
</evidence>
<sequence>MESSILKSPNLSSPSFGVPSIPALSSSSTSPFSSLHLRSQNHRTISLTTAGKFRVSYSLSASSPLPPHAPRRRPNYIPNRISDPNYVRIFDTTLRDGEQSPGATLTSKEKLDIARQLAKLGVDIIEAGFPAASKDDFEAVKTIAETVGNTVDENGYVPVICGLSRCNKKDIETAWEAVKYAKRPRIHTFIATSDIHLKYKLKKSKEEVIEIARNMVRFARSLGCEDVEFSPEDAGRSEREYLYEILGEVIKAGATTLNIPDTVGITLPSEFGQLIADIKANTPGIQNVIISTHCQNDLGLSTANTLSGAHSGARQVEVTINGIGERAGNASLEEVVMAIKCRGDHVLGGLFTGIDTRHIVMTSKMVEEYTGMQTQPHKAIVGANAFAHESGIHQDGMLKHKGTYEIMSPEEIGLERSNDAGIVLGKLSGRHALKDRLNELGYVLDDGQLSNLFWRFKAVAEQKKRVTDADLIALVSDEVFQPEAVWKLLDMQITCGTLGLSTSTVKLADSDGKEHVACSVGTGPVDAAYKAVDLIVKEPATLLEYSMNAVTEGIDAIATTRVLIRGDNNYSSTNAVTGESVERTFSGTGAGMDIVVSSVKAYVGALNKMLGFKEHTSTLSKTPLETNEVPA</sequence>
<proteinExistence type="evidence at protein level"/>
<protein>
    <recommendedName>
        <fullName evidence="9">2-isopropylmalate synthase 2, chloroplastic</fullName>
        <ecNumber evidence="5 6">2.3.3.13</ecNumber>
    </recommendedName>
    <alternativeName>
        <fullName evidence="7">2-isopropylmalate synthase 1</fullName>
    </alternativeName>
    <alternativeName>
        <fullName evidence="8">Methylthioalkylmalate synthase-like 3</fullName>
    </alternativeName>
</protein>
<dbReference type="EC" id="2.3.3.13" evidence="5 6"/>
<dbReference type="EMBL" id="AF327647">
    <property type="protein sequence ID" value="AAG52882.1"/>
    <property type="molecule type" value="mRNA"/>
</dbReference>
<dbReference type="EMBL" id="AC016662">
    <property type="protein sequence ID" value="AAG52530.1"/>
    <property type="molecule type" value="Genomic_DNA"/>
</dbReference>
<dbReference type="EMBL" id="CP002684">
    <property type="protein sequence ID" value="AEE35540.1"/>
    <property type="molecule type" value="Genomic_DNA"/>
</dbReference>
<dbReference type="EMBL" id="AY057659">
    <property type="protein sequence ID" value="AAL15290.1"/>
    <property type="molecule type" value="mRNA"/>
</dbReference>
<dbReference type="EMBL" id="BT000815">
    <property type="protein sequence ID" value="AAN33190.1"/>
    <property type="molecule type" value="mRNA"/>
</dbReference>
<dbReference type="EMBL" id="AK118569">
    <property type="protein sequence ID" value="BAC43169.1"/>
    <property type="status" value="ALT_FRAME"/>
    <property type="molecule type" value="mRNA"/>
</dbReference>
<dbReference type="PIR" id="C96768">
    <property type="entry name" value="C96768"/>
</dbReference>
<dbReference type="RefSeq" id="NP_177544.1">
    <property type="nucleotide sequence ID" value="NM_106063.3"/>
</dbReference>
<dbReference type="SMR" id="Q9C550"/>
<dbReference type="BioGRID" id="28961">
    <property type="interactions" value="4"/>
</dbReference>
<dbReference type="FunCoup" id="Q9C550">
    <property type="interactions" value="1169"/>
</dbReference>
<dbReference type="STRING" id="3702.Q9C550"/>
<dbReference type="iPTMnet" id="Q9C550"/>
<dbReference type="PaxDb" id="3702-AT1G74040.1"/>
<dbReference type="ProteomicsDB" id="250740"/>
<dbReference type="EnsemblPlants" id="AT1G74040.1">
    <property type="protein sequence ID" value="AT1G74040.1"/>
    <property type="gene ID" value="AT1G74040"/>
</dbReference>
<dbReference type="GeneID" id="843742"/>
<dbReference type="Gramene" id="AT1G74040.1">
    <property type="protein sequence ID" value="AT1G74040.1"/>
    <property type="gene ID" value="AT1G74040"/>
</dbReference>
<dbReference type="KEGG" id="ath:AT1G74040"/>
<dbReference type="Araport" id="AT1G74040"/>
<dbReference type="TAIR" id="AT1G74040">
    <property type="gene designation" value="IMS1"/>
</dbReference>
<dbReference type="eggNOG" id="KOG2367">
    <property type="taxonomic scope" value="Eukaryota"/>
</dbReference>
<dbReference type="HOGENOM" id="CLU_022158_0_1_1"/>
<dbReference type="InParanoid" id="Q9C550"/>
<dbReference type="PhylomeDB" id="Q9C550"/>
<dbReference type="BRENDA" id="2.3.3.13">
    <property type="organism ID" value="399"/>
</dbReference>
<dbReference type="UniPathway" id="UPA00048">
    <property type="reaction ID" value="UER00070"/>
</dbReference>
<dbReference type="PRO" id="PR:Q9C550"/>
<dbReference type="Proteomes" id="UP000006548">
    <property type="component" value="Chromosome 1"/>
</dbReference>
<dbReference type="ExpressionAtlas" id="Q9C550">
    <property type="expression patterns" value="baseline and differential"/>
</dbReference>
<dbReference type="GO" id="GO:0009507">
    <property type="term" value="C:chloroplast"/>
    <property type="evidence" value="ECO:0007005"/>
    <property type="project" value="TAIR"/>
</dbReference>
<dbReference type="GO" id="GO:0009941">
    <property type="term" value="C:chloroplast envelope"/>
    <property type="evidence" value="ECO:0007005"/>
    <property type="project" value="TAIR"/>
</dbReference>
<dbReference type="GO" id="GO:0003852">
    <property type="term" value="F:2-isopropylmalate synthase activity"/>
    <property type="evidence" value="ECO:0000314"/>
    <property type="project" value="TAIR"/>
</dbReference>
<dbReference type="GO" id="GO:0016829">
    <property type="term" value="F:lyase activity"/>
    <property type="evidence" value="ECO:0007669"/>
    <property type="project" value="UniProtKB-KW"/>
</dbReference>
<dbReference type="GO" id="GO:0046872">
    <property type="term" value="F:metal ion binding"/>
    <property type="evidence" value="ECO:0007669"/>
    <property type="project" value="UniProtKB-KW"/>
</dbReference>
<dbReference type="GO" id="GO:0009098">
    <property type="term" value="P:L-leucine biosynthetic process"/>
    <property type="evidence" value="ECO:0000314"/>
    <property type="project" value="TAIR"/>
</dbReference>
<dbReference type="CDD" id="cd07940">
    <property type="entry name" value="DRE_TIM_IPMS"/>
    <property type="match status" value="1"/>
</dbReference>
<dbReference type="FunFam" id="3.20.20.70:FF:000010">
    <property type="entry name" value="2-isopropylmalate synthase"/>
    <property type="match status" value="1"/>
</dbReference>
<dbReference type="FunFam" id="1.10.238.260:FF:000003">
    <property type="entry name" value="2-isopropylmalate synthase 1 chloroplastic"/>
    <property type="match status" value="1"/>
</dbReference>
<dbReference type="FunFam" id="3.30.160.270:FF:000004">
    <property type="entry name" value="2-isopropylmalate synthase B"/>
    <property type="match status" value="1"/>
</dbReference>
<dbReference type="Gene3D" id="1.10.238.260">
    <property type="match status" value="1"/>
</dbReference>
<dbReference type="Gene3D" id="3.30.160.270">
    <property type="match status" value="1"/>
</dbReference>
<dbReference type="Gene3D" id="3.20.20.70">
    <property type="entry name" value="Aldolase class I"/>
    <property type="match status" value="1"/>
</dbReference>
<dbReference type="HAMAP" id="MF_01025">
    <property type="entry name" value="LeuA_type1"/>
    <property type="match status" value="1"/>
</dbReference>
<dbReference type="InterPro" id="IPR050073">
    <property type="entry name" value="2-IPM_HCS-like"/>
</dbReference>
<dbReference type="InterPro" id="IPR013709">
    <property type="entry name" value="2-isopropylmalate_synth_dimer"/>
</dbReference>
<dbReference type="InterPro" id="IPR002034">
    <property type="entry name" value="AIPM/Hcit_synth_CS"/>
</dbReference>
<dbReference type="InterPro" id="IPR013785">
    <property type="entry name" value="Aldolase_TIM"/>
</dbReference>
<dbReference type="InterPro" id="IPR054691">
    <property type="entry name" value="LeuA/HCS_post-cat"/>
</dbReference>
<dbReference type="InterPro" id="IPR036230">
    <property type="entry name" value="LeuA_allosteric_dom_sf"/>
</dbReference>
<dbReference type="InterPro" id="IPR005671">
    <property type="entry name" value="LeuA_bact_synth"/>
</dbReference>
<dbReference type="InterPro" id="IPR000891">
    <property type="entry name" value="PYR_CT"/>
</dbReference>
<dbReference type="NCBIfam" id="TIGR00973">
    <property type="entry name" value="leuA_bact"/>
    <property type="match status" value="1"/>
</dbReference>
<dbReference type="NCBIfam" id="NF002086">
    <property type="entry name" value="PRK00915.1-3"/>
    <property type="match status" value="1"/>
</dbReference>
<dbReference type="PANTHER" id="PTHR10277:SF9">
    <property type="entry name" value="2-ISOPROPYLMALATE SYNTHASE 1, CHLOROPLASTIC-RELATED"/>
    <property type="match status" value="1"/>
</dbReference>
<dbReference type="PANTHER" id="PTHR10277">
    <property type="entry name" value="HOMOCITRATE SYNTHASE-RELATED"/>
    <property type="match status" value="1"/>
</dbReference>
<dbReference type="Pfam" id="PF22617">
    <property type="entry name" value="HCS_D2"/>
    <property type="match status" value="1"/>
</dbReference>
<dbReference type="Pfam" id="PF00682">
    <property type="entry name" value="HMGL-like"/>
    <property type="match status" value="1"/>
</dbReference>
<dbReference type="Pfam" id="PF08502">
    <property type="entry name" value="LeuA_dimer"/>
    <property type="match status" value="1"/>
</dbReference>
<dbReference type="SMART" id="SM00917">
    <property type="entry name" value="LeuA_dimer"/>
    <property type="match status" value="1"/>
</dbReference>
<dbReference type="SUPFAM" id="SSF110921">
    <property type="entry name" value="2-isopropylmalate synthase LeuA, allosteric (dimerisation) domain"/>
    <property type="match status" value="1"/>
</dbReference>
<dbReference type="SUPFAM" id="SSF51569">
    <property type="entry name" value="Aldolase"/>
    <property type="match status" value="1"/>
</dbReference>
<dbReference type="PROSITE" id="PS00815">
    <property type="entry name" value="AIPM_HOMOCIT_SYNTH_1"/>
    <property type="match status" value="1"/>
</dbReference>
<dbReference type="PROSITE" id="PS50991">
    <property type="entry name" value="PYR_CT"/>
    <property type="match status" value="1"/>
</dbReference>
<keyword id="KW-0028">Amino-acid biosynthesis</keyword>
<keyword id="KW-0100">Branched-chain amino acid biosynthesis</keyword>
<keyword id="KW-0150">Chloroplast</keyword>
<keyword id="KW-0432">Leucine biosynthesis</keyword>
<keyword id="KW-0456">Lyase</keyword>
<keyword id="KW-0479">Metal-binding</keyword>
<keyword id="KW-0934">Plastid</keyword>
<keyword id="KW-1185">Reference proteome</keyword>
<keyword id="KW-0808">Transferase</keyword>
<keyword id="KW-0809">Transit peptide</keyword>
<feature type="transit peptide" description="Chloroplast" evidence="2">
    <location>
        <begin position="1"/>
        <end position="46"/>
    </location>
</feature>
<feature type="chain" id="PRO_0000315840" description="2-isopropylmalate synthase 2, chloroplastic">
    <location>
        <begin position="47"/>
        <end position="631"/>
    </location>
</feature>
<feature type="domain" description="Pyruvate carboxyltransferase" evidence="3">
    <location>
        <begin position="87"/>
        <end position="360"/>
    </location>
</feature>
<feature type="binding site" evidence="1">
    <location>
        <position position="96"/>
    </location>
    <ligand>
        <name>a divalent metal cation</name>
        <dbReference type="ChEBI" id="CHEBI:60240"/>
    </ligand>
</feature>
<feature type="binding site" evidence="1">
    <location>
        <position position="293"/>
    </location>
    <ligand>
        <name>a divalent metal cation</name>
        <dbReference type="ChEBI" id="CHEBI:60240"/>
    </ligand>
</feature>
<feature type="binding site" evidence="1">
    <location>
        <position position="329"/>
    </location>
    <ligand>
        <name>a divalent metal cation</name>
        <dbReference type="ChEBI" id="CHEBI:60240"/>
    </ligand>
</feature>
<feature type="sequence conflict" description="In Ref. 5; BAC43169." evidence="10" ref="5">
    <original>R</original>
    <variation>K</variation>
    <location>
        <position position="213"/>
    </location>
</feature>
<accession>Q9C550</accession>
<accession>Q8GWX8</accession>
<organism>
    <name type="scientific">Arabidopsis thaliana</name>
    <name type="common">Mouse-ear cress</name>
    <dbReference type="NCBI Taxonomy" id="3702"/>
    <lineage>
        <taxon>Eukaryota</taxon>
        <taxon>Viridiplantae</taxon>
        <taxon>Streptophyta</taxon>
        <taxon>Embryophyta</taxon>
        <taxon>Tracheophyta</taxon>
        <taxon>Spermatophyta</taxon>
        <taxon>Magnoliopsida</taxon>
        <taxon>eudicotyledons</taxon>
        <taxon>Gunneridae</taxon>
        <taxon>Pentapetalae</taxon>
        <taxon>rosids</taxon>
        <taxon>malvids</taxon>
        <taxon>Brassicales</taxon>
        <taxon>Brassicaceae</taxon>
        <taxon>Camelineae</taxon>
        <taxon>Arabidopsis</taxon>
    </lineage>
</organism>
<gene>
    <name evidence="9" type="primary">IPMS2</name>
    <name evidence="7" type="synonym">IMS1</name>
    <name evidence="8" type="synonym">MAML-3</name>
    <name evidence="12" type="ordered locus">At1g74040</name>
    <name evidence="13" type="ORF">F2P9.9</name>
</gene>
<reference key="1">
    <citation type="journal article" date="2002" name="J. Exp. Bot.">
        <title>Isolation and expression analysis of the isopropylmalate synthase gene family of Arabidopsis thaliana.</title>
        <authorList>
            <person name="Junk D.J."/>
            <person name="Mourad G.S."/>
        </authorList>
    </citation>
    <scope>NUCLEOTIDE SEQUENCE [MRNA]</scope>
    <scope>TISSUE SPECIFICITY</scope>
</reference>
<reference key="2">
    <citation type="journal article" date="2000" name="Nature">
        <title>Sequence and analysis of chromosome 1 of the plant Arabidopsis thaliana.</title>
        <authorList>
            <person name="Theologis A."/>
            <person name="Ecker J.R."/>
            <person name="Palm C.J."/>
            <person name="Federspiel N.A."/>
            <person name="Kaul S."/>
            <person name="White O."/>
            <person name="Alonso J."/>
            <person name="Altafi H."/>
            <person name="Araujo R."/>
            <person name="Bowman C.L."/>
            <person name="Brooks S.Y."/>
            <person name="Buehler E."/>
            <person name="Chan A."/>
            <person name="Chao Q."/>
            <person name="Chen H."/>
            <person name="Cheuk R.F."/>
            <person name="Chin C.W."/>
            <person name="Chung M.K."/>
            <person name="Conn L."/>
            <person name="Conway A.B."/>
            <person name="Conway A.R."/>
            <person name="Creasy T.H."/>
            <person name="Dewar K."/>
            <person name="Dunn P."/>
            <person name="Etgu P."/>
            <person name="Feldblyum T.V."/>
            <person name="Feng J.-D."/>
            <person name="Fong B."/>
            <person name="Fujii C.Y."/>
            <person name="Gill J.E."/>
            <person name="Goldsmith A.D."/>
            <person name="Haas B."/>
            <person name="Hansen N.F."/>
            <person name="Hughes B."/>
            <person name="Huizar L."/>
            <person name="Hunter J.L."/>
            <person name="Jenkins J."/>
            <person name="Johnson-Hopson C."/>
            <person name="Khan S."/>
            <person name="Khaykin E."/>
            <person name="Kim C.J."/>
            <person name="Koo H.L."/>
            <person name="Kremenetskaia I."/>
            <person name="Kurtz D.B."/>
            <person name="Kwan A."/>
            <person name="Lam B."/>
            <person name="Langin-Hooper S."/>
            <person name="Lee A."/>
            <person name="Lee J.M."/>
            <person name="Lenz C.A."/>
            <person name="Li J.H."/>
            <person name="Li Y.-P."/>
            <person name="Lin X."/>
            <person name="Liu S.X."/>
            <person name="Liu Z.A."/>
            <person name="Luros J.S."/>
            <person name="Maiti R."/>
            <person name="Marziali A."/>
            <person name="Militscher J."/>
            <person name="Miranda M."/>
            <person name="Nguyen M."/>
            <person name="Nierman W.C."/>
            <person name="Osborne B.I."/>
            <person name="Pai G."/>
            <person name="Peterson J."/>
            <person name="Pham P.K."/>
            <person name="Rizzo M."/>
            <person name="Rooney T."/>
            <person name="Rowley D."/>
            <person name="Sakano H."/>
            <person name="Salzberg S.L."/>
            <person name="Schwartz J.R."/>
            <person name="Shinn P."/>
            <person name="Southwick A.M."/>
            <person name="Sun H."/>
            <person name="Tallon L.J."/>
            <person name="Tambunga G."/>
            <person name="Toriumi M.J."/>
            <person name="Town C.D."/>
            <person name="Utterback T."/>
            <person name="Van Aken S."/>
            <person name="Vaysberg M."/>
            <person name="Vysotskaia V.S."/>
            <person name="Walker M."/>
            <person name="Wu D."/>
            <person name="Yu G."/>
            <person name="Fraser C.M."/>
            <person name="Venter J.C."/>
            <person name="Davis R.W."/>
        </authorList>
    </citation>
    <scope>NUCLEOTIDE SEQUENCE [LARGE SCALE GENOMIC DNA]</scope>
    <source>
        <strain>cv. Columbia</strain>
    </source>
</reference>
<reference key="3">
    <citation type="journal article" date="2017" name="Plant J.">
        <title>Araport11: a complete reannotation of the Arabidopsis thaliana reference genome.</title>
        <authorList>
            <person name="Cheng C.Y."/>
            <person name="Krishnakumar V."/>
            <person name="Chan A.P."/>
            <person name="Thibaud-Nissen F."/>
            <person name="Schobel S."/>
            <person name="Town C.D."/>
        </authorList>
    </citation>
    <scope>GENOME REANNOTATION</scope>
    <source>
        <strain>cv. Columbia</strain>
    </source>
</reference>
<reference key="4">
    <citation type="journal article" date="2003" name="Science">
        <title>Empirical analysis of transcriptional activity in the Arabidopsis genome.</title>
        <authorList>
            <person name="Yamada K."/>
            <person name="Lim J."/>
            <person name="Dale J.M."/>
            <person name="Chen H."/>
            <person name="Shinn P."/>
            <person name="Palm C.J."/>
            <person name="Southwick A.M."/>
            <person name="Wu H.C."/>
            <person name="Kim C.J."/>
            <person name="Nguyen M."/>
            <person name="Pham P.K."/>
            <person name="Cheuk R.F."/>
            <person name="Karlin-Newmann G."/>
            <person name="Liu S.X."/>
            <person name="Lam B."/>
            <person name="Sakano H."/>
            <person name="Wu T."/>
            <person name="Yu G."/>
            <person name="Miranda M."/>
            <person name="Quach H.L."/>
            <person name="Tripp M."/>
            <person name="Chang C.H."/>
            <person name="Lee J.M."/>
            <person name="Toriumi M.J."/>
            <person name="Chan M.M."/>
            <person name="Tang C.C."/>
            <person name="Onodera C.S."/>
            <person name="Deng J.M."/>
            <person name="Akiyama K."/>
            <person name="Ansari Y."/>
            <person name="Arakawa T."/>
            <person name="Banh J."/>
            <person name="Banno F."/>
            <person name="Bowser L."/>
            <person name="Brooks S.Y."/>
            <person name="Carninci P."/>
            <person name="Chao Q."/>
            <person name="Choy N."/>
            <person name="Enju A."/>
            <person name="Goldsmith A.D."/>
            <person name="Gurjal M."/>
            <person name="Hansen N.F."/>
            <person name="Hayashizaki Y."/>
            <person name="Johnson-Hopson C."/>
            <person name="Hsuan V.W."/>
            <person name="Iida K."/>
            <person name="Karnes M."/>
            <person name="Khan S."/>
            <person name="Koesema E."/>
            <person name="Ishida J."/>
            <person name="Jiang P.X."/>
            <person name="Jones T."/>
            <person name="Kawai J."/>
            <person name="Kamiya A."/>
            <person name="Meyers C."/>
            <person name="Nakajima M."/>
            <person name="Narusaka M."/>
            <person name="Seki M."/>
            <person name="Sakurai T."/>
            <person name="Satou M."/>
            <person name="Tamse R."/>
            <person name="Vaysberg M."/>
            <person name="Wallender E.K."/>
            <person name="Wong C."/>
            <person name="Yamamura Y."/>
            <person name="Yuan S."/>
            <person name="Shinozaki K."/>
            <person name="Davis R.W."/>
            <person name="Theologis A."/>
            <person name="Ecker J.R."/>
        </authorList>
    </citation>
    <scope>NUCLEOTIDE SEQUENCE [LARGE SCALE MRNA]</scope>
    <source>
        <strain>cv. Columbia</strain>
    </source>
</reference>
<reference key="5">
    <citation type="journal article" date="2002" name="Science">
        <title>Functional annotation of a full-length Arabidopsis cDNA collection.</title>
        <authorList>
            <person name="Seki M."/>
            <person name="Narusaka M."/>
            <person name="Kamiya A."/>
            <person name="Ishida J."/>
            <person name="Satou M."/>
            <person name="Sakurai T."/>
            <person name="Nakajima M."/>
            <person name="Enju A."/>
            <person name="Akiyama K."/>
            <person name="Oono Y."/>
            <person name="Muramatsu M."/>
            <person name="Hayashizaki Y."/>
            <person name="Kawai J."/>
            <person name="Carninci P."/>
            <person name="Itoh M."/>
            <person name="Ishii Y."/>
            <person name="Arakawa T."/>
            <person name="Shibata K."/>
            <person name="Shinagawa A."/>
            <person name="Shinozaki K."/>
        </authorList>
    </citation>
    <scope>NUCLEOTIDE SEQUENCE [LARGE SCALE MRNA]</scope>
    <source>
        <strain>cv. Columbia</strain>
    </source>
</reference>
<reference key="6">
    <citation type="journal article" date="2004" name="Plant Physiol.">
        <title>Glucosinolate and amino acid biosynthesis in Arabidopsis.</title>
        <authorList>
            <person name="Field B."/>
            <person name="Cardon G."/>
            <person name="Traka M."/>
            <person name="Botterman J."/>
            <person name="Vancanneyt G."/>
            <person name="Mithen R."/>
        </authorList>
    </citation>
    <scope>FUNCTION</scope>
    <scope>CATALYTIC ACTIVITY</scope>
    <scope>PATHWAY</scope>
    <source>
        <strain>cv. Columbia</strain>
    </source>
</reference>
<reference key="7">
    <citation type="journal article" date="2007" name="Plant Physiol.">
        <title>Two Arabidopsis genes (IPMS1 and IPMS2) encode isopropylmalate synthase, the branchpoint step in the biosynthesis of leucine.</title>
        <authorList>
            <person name="de Kraker J.-W."/>
            <person name="Luck K."/>
            <person name="Textor S."/>
            <person name="Tokuhisa J.G."/>
            <person name="Gershenzon J."/>
        </authorList>
    </citation>
    <scope>FUNCTION</scope>
    <scope>SUBUNIT</scope>
    <scope>ACTIVITY REGULATION</scope>
    <scope>TISSUE SPECIFICITY</scope>
    <scope>BIOPHYSICOCHEMICAL PROPERTIES</scope>
    <scope>CATALYTIC ACTIVITY</scope>
    <scope>PATHWAY</scope>
    <scope>DISRUPTION PHENOTYPE</scope>
    <scope>COFACTOR</scope>
    <source>
        <strain>cv. Columbia</strain>
    </source>
</reference>
<reference key="8">
    <citation type="journal article" date="2007" name="Plant Physiol.">
        <title>MAM3 catalyzes the formation of all aliphatic glucosinolate chain lengths in Arabidopsis.</title>
        <authorList>
            <person name="Textor S."/>
            <person name="de Kraker J.-W."/>
            <person name="Hause B."/>
            <person name="Gershenzon J."/>
            <person name="Tokuhisa J.G."/>
        </authorList>
    </citation>
    <scope>NOMENCLATURE</scope>
    <source>
        <strain>cv. Columbia</strain>
    </source>
</reference>